<sequence>MPKTLHLAEQLIARPSLTPDDAGCQQIIAERLAPLGFSCETITSGPADFRVTNLWAKRAAAPVKSAQHTTKLVVFAGHTDIVPSGPVQQWRCHPFTPTQFDGKLYGRGAADMKTSLAAFVVAVEEFLTAQPDTALAIGFLLTSDEEGPALDGTVKVCEALQARGERIDYCIVGEPTSLERTGDMIKNGRRGTLSARLTVKGVQGHIAYPHLAKNPIHLVAPALAELVGVEWDRGNAFFPPTSWQISNIHSGTGASNVIPGAVVIDFNFRFSTESTPESLQTRLAAVLERHELDYELAWTLGGTPFLTEPGTLVDAVVDAIKQETGLTTVLSTTGGTSDGRFIARICPQVIEFGPPNASIHKIDEHINVADIEPLTNIYRRVLENLSAGLSA</sequence>
<proteinExistence type="inferred from homology"/>
<organism>
    <name type="scientific">Albidiferax ferrireducens (strain ATCC BAA-621 / DSM 15236 / T118)</name>
    <name type="common">Rhodoferax ferrireducens</name>
    <dbReference type="NCBI Taxonomy" id="338969"/>
    <lineage>
        <taxon>Bacteria</taxon>
        <taxon>Pseudomonadati</taxon>
        <taxon>Pseudomonadota</taxon>
        <taxon>Betaproteobacteria</taxon>
        <taxon>Burkholderiales</taxon>
        <taxon>Comamonadaceae</taxon>
        <taxon>Rhodoferax</taxon>
    </lineage>
</organism>
<keyword id="KW-0028">Amino-acid biosynthesis</keyword>
<keyword id="KW-0170">Cobalt</keyword>
<keyword id="KW-0220">Diaminopimelate biosynthesis</keyword>
<keyword id="KW-0378">Hydrolase</keyword>
<keyword id="KW-0457">Lysine biosynthesis</keyword>
<keyword id="KW-0479">Metal-binding</keyword>
<keyword id="KW-1185">Reference proteome</keyword>
<keyword id="KW-0862">Zinc</keyword>
<reference key="1">
    <citation type="submission" date="2006-02" db="EMBL/GenBank/DDBJ databases">
        <title>Complete sequence of chromosome of Rhodoferax ferrireducens DSM 15236.</title>
        <authorList>
            <person name="Copeland A."/>
            <person name="Lucas S."/>
            <person name="Lapidus A."/>
            <person name="Barry K."/>
            <person name="Detter J.C."/>
            <person name="Glavina del Rio T."/>
            <person name="Hammon N."/>
            <person name="Israni S."/>
            <person name="Pitluck S."/>
            <person name="Brettin T."/>
            <person name="Bruce D."/>
            <person name="Han C."/>
            <person name="Tapia R."/>
            <person name="Gilna P."/>
            <person name="Kiss H."/>
            <person name="Schmutz J."/>
            <person name="Larimer F."/>
            <person name="Land M."/>
            <person name="Kyrpides N."/>
            <person name="Ivanova N."/>
            <person name="Richardson P."/>
        </authorList>
    </citation>
    <scope>NUCLEOTIDE SEQUENCE [LARGE SCALE GENOMIC DNA]</scope>
    <source>
        <strain>ATCC BAA-621 / DSM 15236 / T118</strain>
    </source>
</reference>
<gene>
    <name evidence="1" type="primary">dapE</name>
    <name type="ordered locus">Rfer_2044</name>
</gene>
<name>DAPE_ALBFT</name>
<protein>
    <recommendedName>
        <fullName evidence="1">Succinyl-diaminopimelate desuccinylase</fullName>
        <shortName evidence="1">SDAP desuccinylase</shortName>
        <ecNumber evidence="1">3.5.1.18</ecNumber>
    </recommendedName>
    <alternativeName>
        <fullName evidence="1">N-succinyl-LL-2,6-diaminoheptanedioate amidohydrolase</fullName>
    </alternativeName>
</protein>
<feature type="chain" id="PRO_0000375688" description="Succinyl-diaminopimelate desuccinylase">
    <location>
        <begin position="1"/>
        <end position="391"/>
    </location>
</feature>
<feature type="active site" evidence="1">
    <location>
        <position position="80"/>
    </location>
</feature>
<feature type="active site" description="Proton acceptor" evidence="1">
    <location>
        <position position="145"/>
    </location>
</feature>
<feature type="binding site" evidence="1">
    <location>
        <position position="78"/>
    </location>
    <ligand>
        <name>Zn(2+)</name>
        <dbReference type="ChEBI" id="CHEBI:29105"/>
        <label>1</label>
    </ligand>
</feature>
<feature type="binding site" evidence="1">
    <location>
        <position position="111"/>
    </location>
    <ligand>
        <name>Zn(2+)</name>
        <dbReference type="ChEBI" id="CHEBI:29105"/>
        <label>1</label>
    </ligand>
</feature>
<feature type="binding site" evidence="1">
    <location>
        <position position="111"/>
    </location>
    <ligand>
        <name>Zn(2+)</name>
        <dbReference type="ChEBI" id="CHEBI:29105"/>
        <label>2</label>
    </ligand>
</feature>
<feature type="binding site" evidence="1">
    <location>
        <position position="146"/>
    </location>
    <ligand>
        <name>Zn(2+)</name>
        <dbReference type="ChEBI" id="CHEBI:29105"/>
        <label>2</label>
    </ligand>
</feature>
<feature type="binding site" evidence="1">
    <location>
        <position position="174"/>
    </location>
    <ligand>
        <name>Zn(2+)</name>
        <dbReference type="ChEBI" id="CHEBI:29105"/>
        <label>1</label>
    </ligand>
</feature>
<feature type="binding site" evidence="1">
    <location>
        <position position="360"/>
    </location>
    <ligand>
        <name>Zn(2+)</name>
        <dbReference type="ChEBI" id="CHEBI:29105"/>
        <label>2</label>
    </ligand>
</feature>
<dbReference type="EC" id="3.5.1.18" evidence="1"/>
<dbReference type="EMBL" id="CP000267">
    <property type="protein sequence ID" value="ABD69769.1"/>
    <property type="molecule type" value="Genomic_DNA"/>
</dbReference>
<dbReference type="RefSeq" id="WP_011464337.1">
    <property type="nucleotide sequence ID" value="NC_007908.1"/>
</dbReference>
<dbReference type="SMR" id="Q21WT4"/>
<dbReference type="STRING" id="338969.Rfer_2044"/>
<dbReference type="KEGG" id="rfr:Rfer_2044"/>
<dbReference type="eggNOG" id="COG0624">
    <property type="taxonomic scope" value="Bacteria"/>
</dbReference>
<dbReference type="HOGENOM" id="CLU_021802_4_0_4"/>
<dbReference type="OrthoDB" id="9809784at2"/>
<dbReference type="UniPathway" id="UPA00034">
    <property type="reaction ID" value="UER00021"/>
</dbReference>
<dbReference type="Proteomes" id="UP000008332">
    <property type="component" value="Chromosome"/>
</dbReference>
<dbReference type="GO" id="GO:0008777">
    <property type="term" value="F:acetylornithine deacetylase activity"/>
    <property type="evidence" value="ECO:0007669"/>
    <property type="project" value="TreeGrafter"/>
</dbReference>
<dbReference type="GO" id="GO:0050897">
    <property type="term" value="F:cobalt ion binding"/>
    <property type="evidence" value="ECO:0007669"/>
    <property type="project" value="UniProtKB-UniRule"/>
</dbReference>
<dbReference type="GO" id="GO:0009014">
    <property type="term" value="F:succinyl-diaminopimelate desuccinylase activity"/>
    <property type="evidence" value="ECO:0007669"/>
    <property type="project" value="UniProtKB-UniRule"/>
</dbReference>
<dbReference type="GO" id="GO:0008270">
    <property type="term" value="F:zinc ion binding"/>
    <property type="evidence" value="ECO:0007669"/>
    <property type="project" value="UniProtKB-UniRule"/>
</dbReference>
<dbReference type="GO" id="GO:0019877">
    <property type="term" value="P:diaminopimelate biosynthetic process"/>
    <property type="evidence" value="ECO:0007669"/>
    <property type="project" value="UniProtKB-UniRule"/>
</dbReference>
<dbReference type="GO" id="GO:0006526">
    <property type="term" value="P:L-arginine biosynthetic process"/>
    <property type="evidence" value="ECO:0007669"/>
    <property type="project" value="TreeGrafter"/>
</dbReference>
<dbReference type="GO" id="GO:0009089">
    <property type="term" value="P:lysine biosynthetic process via diaminopimelate"/>
    <property type="evidence" value="ECO:0007669"/>
    <property type="project" value="UniProtKB-UniRule"/>
</dbReference>
<dbReference type="CDD" id="cd03891">
    <property type="entry name" value="M20_DapE_proteobac"/>
    <property type="match status" value="1"/>
</dbReference>
<dbReference type="FunFam" id="3.30.70.360:FF:000011">
    <property type="entry name" value="Succinyl-diaminopimelate desuccinylase"/>
    <property type="match status" value="1"/>
</dbReference>
<dbReference type="Gene3D" id="3.40.630.10">
    <property type="entry name" value="Zn peptidases"/>
    <property type="match status" value="2"/>
</dbReference>
<dbReference type="HAMAP" id="MF_01690">
    <property type="entry name" value="DapE"/>
    <property type="match status" value="1"/>
</dbReference>
<dbReference type="InterPro" id="IPR036264">
    <property type="entry name" value="Bact_exopeptidase_dim_dom"/>
</dbReference>
<dbReference type="InterPro" id="IPR005941">
    <property type="entry name" value="DapE_proteobac"/>
</dbReference>
<dbReference type="InterPro" id="IPR002933">
    <property type="entry name" value="Peptidase_M20"/>
</dbReference>
<dbReference type="InterPro" id="IPR011650">
    <property type="entry name" value="Peptidase_M20_dimer"/>
</dbReference>
<dbReference type="InterPro" id="IPR050072">
    <property type="entry name" value="Peptidase_M20A"/>
</dbReference>
<dbReference type="NCBIfam" id="TIGR01246">
    <property type="entry name" value="dapE_proteo"/>
    <property type="match status" value="1"/>
</dbReference>
<dbReference type="NCBIfam" id="NF009557">
    <property type="entry name" value="PRK13009.1"/>
    <property type="match status" value="1"/>
</dbReference>
<dbReference type="PANTHER" id="PTHR43808">
    <property type="entry name" value="ACETYLORNITHINE DEACETYLASE"/>
    <property type="match status" value="1"/>
</dbReference>
<dbReference type="PANTHER" id="PTHR43808:SF31">
    <property type="entry name" value="N-ACETYL-L-CITRULLINE DEACETYLASE"/>
    <property type="match status" value="1"/>
</dbReference>
<dbReference type="Pfam" id="PF07687">
    <property type="entry name" value="M20_dimer"/>
    <property type="match status" value="1"/>
</dbReference>
<dbReference type="Pfam" id="PF01546">
    <property type="entry name" value="Peptidase_M20"/>
    <property type="match status" value="1"/>
</dbReference>
<dbReference type="SUPFAM" id="SSF55031">
    <property type="entry name" value="Bacterial exopeptidase dimerisation domain"/>
    <property type="match status" value="1"/>
</dbReference>
<dbReference type="SUPFAM" id="SSF53187">
    <property type="entry name" value="Zn-dependent exopeptidases"/>
    <property type="match status" value="1"/>
</dbReference>
<comment type="function">
    <text evidence="1">Catalyzes the hydrolysis of N-succinyl-L,L-diaminopimelic acid (SDAP), forming succinate and LL-2,6-diaminopimelate (DAP), an intermediate involved in the bacterial biosynthesis of lysine and meso-diaminopimelic acid, an essential component of bacterial cell walls.</text>
</comment>
<comment type="catalytic activity">
    <reaction evidence="1">
        <text>N-succinyl-(2S,6S)-2,6-diaminopimelate + H2O = (2S,6S)-2,6-diaminopimelate + succinate</text>
        <dbReference type="Rhea" id="RHEA:22608"/>
        <dbReference type="ChEBI" id="CHEBI:15377"/>
        <dbReference type="ChEBI" id="CHEBI:30031"/>
        <dbReference type="ChEBI" id="CHEBI:57609"/>
        <dbReference type="ChEBI" id="CHEBI:58087"/>
        <dbReference type="EC" id="3.5.1.18"/>
    </reaction>
</comment>
<comment type="cofactor">
    <cofactor evidence="1">
        <name>Zn(2+)</name>
        <dbReference type="ChEBI" id="CHEBI:29105"/>
    </cofactor>
    <cofactor evidence="1">
        <name>Co(2+)</name>
        <dbReference type="ChEBI" id="CHEBI:48828"/>
    </cofactor>
    <text evidence="1">Binds 2 Zn(2+) or Co(2+) ions per subunit.</text>
</comment>
<comment type="pathway">
    <text evidence="1">Amino-acid biosynthesis; L-lysine biosynthesis via DAP pathway; LL-2,6-diaminopimelate from (S)-tetrahydrodipicolinate (succinylase route): step 3/3.</text>
</comment>
<comment type="subunit">
    <text evidence="1">Homodimer.</text>
</comment>
<comment type="similarity">
    <text evidence="1">Belongs to the peptidase M20A family. DapE subfamily.</text>
</comment>
<accession>Q21WT4</accession>
<evidence type="ECO:0000255" key="1">
    <source>
        <dbReference type="HAMAP-Rule" id="MF_01690"/>
    </source>
</evidence>